<proteinExistence type="inferred from homology"/>
<keyword id="KW-1185">Reference proteome</keyword>
<keyword id="KW-0687">Ribonucleoprotein</keyword>
<keyword id="KW-0689">Ribosomal protein</keyword>
<keyword id="KW-0694">RNA-binding</keyword>
<keyword id="KW-0699">rRNA-binding</keyword>
<evidence type="ECO:0000255" key="1">
    <source>
        <dbReference type="HAMAP-Rule" id="MF_01326"/>
    </source>
</evidence>
<evidence type="ECO:0000305" key="2"/>
<feature type="chain" id="PRO_1000086473" description="Large ribosomal subunit protein uL24">
    <location>
        <begin position="1"/>
        <end position="76"/>
    </location>
</feature>
<reference key="1">
    <citation type="submission" date="2007-07" db="EMBL/GenBank/DDBJ databases">
        <title>Complete genome sequence of Campylobacter hominis ATCC BAA-381, a commensal isolated from the human gastrointestinal tract.</title>
        <authorList>
            <person name="Fouts D.E."/>
            <person name="Mongodin E.F."/>
            <person name="Puiu D."/>
            <person name="Sebastian Y."/>
            <person name="Miller W.G."/>
            <person name="Mandrell R.E."/>
            <person name="Nelson K.E."/>
        </authorList>
    </citation>
    <scope>NUCLEOTIDE SEQUENCE [LARGE SCALE GENOMIC DNA]</scope>
    <source>
        <strain>ATCC BAA-381 / DSM 21671 / CCUG 45161 / LMG 19568 / NCTC 13146 / CH001A</strain>
    </source>
</reference>
<dbReference type="EMBL" id="CP000776">
    <property type="protein sequence ID" value="ABS51249.1"/>
    <property type="molecule type" value="Genomic_DNA"/>
</dbReference>
<dbReference type="SMR" id="A7HZL7"/>
<dbReference type="STRING" id="360107.CHAB381_0095"/>
<dbReference type="KEGG" id="cha:CHAB381_0095"/>
<dbReference type="eggNOG" id="COG0198">
    <property type="taxonomic scope" value="Bacteria"/>
</dbReference>
<dbReference type="HOGENOM" id="CLU_093315_3_0_7"/>
<dbReference type="OrthoDB" id="9807419at2"/>
<dbReference type="Proteomes" id="UP000002407">
    <property type="component" value="Chromosome"/>
</dbReference>
<dbReference type="GO" id="GO:1990904">
    <property type="term" value="C:ribonucleoprotein complex"/>
    <property type="evidence" value="ECO:0007669"/>
    <property type="project" value="UniProtKB-KW"/>
</dbReference>
<dbReference type="GO" id="GO:0005840">
    <property type="term" value="C:ribosome"/>
    <property type="evidence" value="ECO:0007669"/>
    <property type="project" value="UniProtKB-KW"/>
</dbReference>
<dbReference type="GO" id="GO:0019843">
    <property type="term" value="F:rRNA binding"/>
    <property type="evidence" value="ECO:0007669"/>
    <property type="project" value="UniProtKB-UniRule"/>
</dbReference>
<dbReference type="GO" id="GO:0003735">
    <property type="term" value="F:structural constituent of ribosome"/>
    <property type="evidence" value="ECO:0007669"/>
    <property type="project" value="InterPro"/>
</dbReference>
<dbReference type="GO" id="GO:0006412">
    <property type="term" value="P:translation"/>
    <property type="evidence" value="ECO:0007669"/>
    <property type="project" value="UniProtKB-UniRule"/>
</dbReference>
<dbReference type="CDD" id="cd06089">
    <property type="entry name" value="KOW_RPL26"/>
    <property type="match status" value="1"/>
</dbReference>
<dbReference type="Gene3D" id="2.30.30.30">
    <property type="match status" value="1"/>
</dbReference>
<dbReference type="HAMAP" id="MF_01326_B">
    <property type="entry name" value="Ribosomal_uL24_B"/>
    <property type="match status" value="1"/>
</dbReference>
<dbReference type="InterPro" id="IPR005824">
    <property type="entry name" value="KOW"/>
</dbReference>
<dbReference type="InterPro" id="IPR014722">
    <property type="entry name" value="Rib_uL2_dom2"/>
</dbReference>
<dbReference type="InterPro" id="IPR003256">
    <property type="entry name" value="Ribosomal_uL24"/>
</dbReference>
<dbReference type="InterPro" id="IPR005825">
    <property type="entry name" value="Ribosomal_uL24_CS"/>
</dbReference>
<dbReference type="InterPro" id="IPR041988">
    <property type="entry name" value="Ribosomal_uL24_KOW"/>
</dbReference>
<dbReference type="InterPro" id="IPR008991">
    <property type="entry name" value="Translation_prot_SH3-like_sf"/>
</dbReference>
<dbReference type="NCBIfam" id="TIGR01079">
    <property type="entry name" value="rplX_bact"/>
    <property type="match status" value="1"/>
</dbReference>
<dbReference type="PANTHER" id="PTHR12903">
    <property type="entry name" value="MITOCHONDRIAL RIBOSOMAL PROTEIN L24"/>
    <property type="match status" value="1"/>
</dbReference>
<dbReference type="Pfam" id="PF00467">
    <property type="entry name" value="KOW"/>
    <property type="match status" value="1"/>
</dbReference>
<dbReference type="Pfam" id="PF17136">
    <property type="entry name" value="ribosomal_L24"/>
    <property type="match status" value="1"/>
</dbReference>
<dbReference type="SMART" id="SM00739">
    <property type="entry name" value="KOW"/>
    <property type="match status" value="1"/>
</dbReference>
<dbReference type="SUPFAM" id="SSF50104">
    <property type="entry name" value="Translation proteins SH3-like domain"/>
    <property type="match status" value="1"/>
</dbReference>
<dbReference type="PROSITE" id="PS01108">
    <property type="entry name" value="RIBOSOMAL_L24"/>
    <property type="match status" value="1"/>
</dbReference>
<protein>
    <recommendedName>
        <fullName evidence="1">Large ribosomal subunit protein uL24</fullName>
    </recommendedName>
    <alternativeName>
        <fullName evidence="2">50S ribosomal protein L24</fullName>
    </alternativeName>
</protein>
<comment type="function">
    <text evidence="1">One of two assembly initiator proteins, it binds directly to the 5'-end of the 23S rRNA, where it nucleates assembly of the 50S subunit.</text>
</comment>
<comment type="function">
    <text evidence="1">One of the proteins that surrounds the polypeptide exit tunnel on the outside of the subunit.</text>
</comment>
<comment type="subunit">
    <text evidence="1">Part of the 50S ribosomal subunit.</text>
</comment>
<comment type="similarity">
    <text evidence="1">Belongs to the universal ribosomal protein uL24 family.</text>
</comment>
<sequence length="76" mass="8181">MAKFKIKKGDDVKIITGDDKGKIGKVLSVLPKKSQVIVEGCKIAKKAIKPSEKNPKGGFINKEMPMDISNVALVEG</sequence>
<organism>
    <name type="scientific">Campylobacter hominis (strain ATCC BAA-381 / DSM 21671 / CCUG 45161 / LMG 19568 / NCTC 13146 / CH001A)</name>
    <dbReference type="NCBI Taxonomy" id="360107"/>
    <lineage>
        <taxon>Bacteria</taxon>
        <taxon>Pseudomonadati</taxon>
        <taxon>Campylobacterota</taxon>
        <taxon>Epsilonproteobacteria</taxon>
        <taxon>Campylobacterales</taxon>
        <taxon>Campylobacteraceae</taxon>
        <taxon>Campylobacter</taxon>
    </lineage>
</organism>
<name>RL24_CAMHC</name>
<gene>
    <name evidence="1" type="primary">rplX</name>
    <name type="ordered locus">CHAB381_0095</name>
</gene>
<accession>A7HZL7</accession>